<evidence type="ECO:0000255" key="1">
    <source>
        <dbReference type="HAMAP-Rule" id="MF_01153"/>
    </source>
</evidence>
<proteinExistence type="inferred from homology"/>
<gene>
    <name evidence="1" type="primary">djlA</name>
    <name type="ordered locus">VP0340</name>
</gene>
<reference key="1">
    <citation type="journal article" date="2003" name="Lancet">
        <title>Genome sequence of Vibrio parahaemolyticus: a pathogenic mechanism distinct from that of V. cholerae.</title>
        <authorList>
            <person name="Makino K."/>
            <person name="Oshima K."/>
            <person name="Kurokawa K."/>
            <person name="Yokoyama K."/>
            <person name="Uda T."/>
            <person name="Tagomori K."/>
            <person name="Iijima Y."/>
            <person name="Najima M."/>
            <person name="Nakano M."/>
            <person name="Yamashita A."/>
            <person name="Kubota Y."/>
            <person name="Kimura S."/>
            <person name="Yasunaga T."/>
            <person name="Honda T."/>
            <person name="Shinagawa H."/>
            <person name="Hattori M."/>
            <person name="Iida T."/>
        </authorList>
    </citation>
    <scope>NUCLEOTIDE SEQUENCE [LARGE SCALE GENOMIC DNA]</scope>
    <source>
        <strain>RIMD 2210633</strain>
    </source>
</reference>
<keyword id="KW-0997">Cell inner membrane</keyword>
<keyword id="KW-1003">Cell membrane</keyword>
<keyword id="KW-0143">Chaperone</keyword>
<keyword id="KW-0472">Membrane</keyword>
<keyword id="KW-0812">Transmembrane</keyword>
<keyword id="KW-1133">Transmembrane helix</keyword>
<comment type="function">
    <text evidence="1">Regulatory DnaK co-chaperone. Direct interaction between DnaK and DjlA is needed for the induction of the wcaABCDE operon, involved in the synthesis of a colanic acid polysaccharide capsule, possibly through activation of the RcsB/RcsC phosphotransfer signaling pathway. The colanic acid capsule may help the bacterium survive conditions outside the host.</text>
</comment>
<comment type="subunit">
    <text evidence="1">Homodimer.</text>
</comment>
<comment type="subcellular location">
    <subcellularLocation>
        <location evidence="1">Cell inner membrane</location>
        <topology evidence="1">Single-pass type III membrane protein</topology>
    </subcellularLocation>
</comment>
<comment type="domain">
    <text evidence="1">The transmembrane domain is a dimerization domain.</text>
</comment>
<sequence length="284" mass="31731">MHIFGKILGAFFGLLLGGPFGLLFGLFIGHQFDKARRLSQAGFSTGGFGKGPSQAQRQEEFFKAAFAVMGHVAKAKGQVTKEEIQLATAMMDRMNLHGEQRRAAQDAFREGKESDFPLEDVLVRVKISTAGRFDLLQFFLELQISAAFADGAIHPSERNVLHKIARGLGFSSEQLERRLQMQEAAFRFQHQGGFHGQQQGQYQSSGWQQASQADQLADAYKILDVSPEADGKTVKRAYRKLMNEHHPDKLMAKGLPPEMMNVAKEKSQEIQNAYDLIKKVKGFK</sequence>
<protein>
    <recommendedName>
        <fullName evidence="1">Co-chaperone protein DjlA</fullName>
    </recommendedName>
</protein>
<name>DJLA_VIBPA</name>
<dbReference type="EMBL" id="BA000031">
    <property type="protein sequence ID" value="BAC58603.1"/>
    <property type="molecule type" value="Genomic_DNA"/>
</dbReference>
<dbReference type="RefSeq" id="NP_796719.1">
    <property type="nucleotide sequence ID" value="NC_004603.1"/>
</dbReference>
<dbReference type="RefSeq" id="WP_005459635.1">
    <property type="nucleotide sequence ID" value="NC_004603.1"/>
</dbReference>
<dbReference type="SMR" id="Q87ST2"/>
<dbReference type="GeneID" id="1187807"/>
<dbReference type="KEGG" id="vpa:VP0340"/>
<dbReference type="PATRIC" id="fig|223926.6.peg.327"/>
<dbReference type="eggNOG" id="COG1076">
    <property type="taxonomic scope" value="Bacteria"/>
</dbReference>
<dbReference type="HOGENOM" id="CLU_066221_1_0_6"/>
<dbReference type="Proteomes" id="UP000002493">
    <property type="component" value="Chromosome 1"/>
</dbReference>
<dbReference type="GO" id="GO:0005886">
    <property type="term" value="C:plasma membrane"/>
    <property type="evidence" value="ECO:0007669"/>
    <property type="project" value="UniProtKB-SubCell"/>
</dbReference>
<dbReference type="GO" id="GO:0051087">
    <property type="term" value="F:protein-folding chaperone binding"/>
    <property type="evidence" value="ECO:0007669"/>
    <property type="project" value="InterPro"/>
</dbReference>
<dbReference type="CDD" id="cd06257">
    <property type="entry name" value="DnaJ"/>
    <property type="match status" value="1"/>
</dbReference>
<dbReference type="CDD" id="cd07316">
    <property type="entry name" value="terB_like_DjlA"/>
    <property type="match status" value="1"/>
</dbReference>
<dbReference type="FunFam" id="1.10.287.110:FF:000011">
    <property type="entry name" value="Co-chaperone protein DjlA"/>
    <property type="match status" value="1"/>
</dbReference>
<dbReference type="Gene3D" id="1.10.287.110">
    <property type="entry name" value="DnaJ domain"/>
    <property type="match status" value="1"/>
</dbReference>
<dbReference type="Gene3D" id="1.10.3680.10">
    <property type="entry name" value="TerB-like"/>
    <property type="match status" value="1"/>
</dbReference>
<dbReference type="HAMAP" id="MF_01153">
    <property type="entry name" value="DjlA"/>
    <property type="match status" value="1"/>
</dbReference>
<dbReference type="InterPro" id="IPR023749">
    <property type="entry name" value="DjlA"/>
</dbReference>
<dbReference type="InterPro" id="IPR050817">
    <property type="entry name" value="DjlA_DnaK_co-chaperone"/>
</dbReference>
<dbReference type="InterPro" id="IPR007791">
    <property type="entry name" value="DjlA_N"/>
</dbReference>
<dbReference type="InterPro" id="IPR001623">
    <property type="entry name" value="DnaJ_domain"/>
</dbReference>
<dbReference type="InterPro" id="IPR036869">
    <property type="entry name" value="J_dom_sf"/>
</dbReference>
<dbReference type="InterPro" id="IPR029024">
    <property type="entry name" value="TerB-like"/>
</dbReference>
<dbReference type="NCBIfam" id="NF006948">
    <property type="entry name" value="PRK09430.1"/>
    <property type="match status" value="1"/>
</dbReference>
<dbReference type="PANTHER" id="PTHR24074">
    <property type="entry name" value="CO-CHAPERONE PROTEIN DJLA"/>
    <property type="match status" value="1"/>
</dbReference>
<dbReference type="Pfam" id="PF00226">
    <property type="entry name" value="DnaJ"/>
    <property type="match status" value="1"/>
</dbReference>
<dbReference type="Pfam" id="PF05099">
    <property type="entry name" value="TerB"/>
    <property type="match status" value="1"/>
</dbReference>
<dbReference type="PRINTS" id="PR00625">
    <property type="entry name" value="JDOMAIN"/>
</dbReference>
<dbReference type="SMART" id="SM00271">
    <property type="entry name" value="DnaJ"/>
    <property type="match status" value="1"/>
</dbReference>
<dbReference type="SUPFAM" id="SSF46565">
    <property type="entry name" value="Chaperone J-domain"/>
    <property type="match status" value="1"/>
</dbReference>
<dbReference type="SUPFAM" id="SSF158682">
    <property type="entry name" value="TerB-like"/>
    <property type="match status" value="1"/>
</dbReference>
<dbReference type="PROSITE" id="PS50076">
    <property type="entry name" value="DNAJ_2"/>
    <property type="match status" value="1"/>
</dbReference>
<organism>
    <name type="scientific">Vibrio parahaemolyticus serotype O3:K6 (strain RIMD 2210633)</name>
    <dbReference type="NCBI Taxonomy" id="223926"/>
    <lineage>
        <taxon>Bacteria</taxon>
        <taxon>Pseudomonadati</taxon>
        <taxon>Pseudomonadota</taxon>
        <taxon>Gammaproteobacteria</taxon>
        <taxon>Vibrionales</taxon>
        <taxon>Vibrionaceae</taxon>
        <taxon>Vibrio</taxon>
    </lineage>
</organism>
<accession>Q87ST2</accession>
<feature type="chain" id="PRO_0000209442" description="Co-chaperone protein DjlA">
    <location>
        <begin position="1"/>
        <end position="284"/>
    </location>
</feature>
<feature type="topological domain" description="Periplasmic" evidence="1">
    <location>
        <begin position="1"/>
        <end position="6"/>
    </location>
</feature>
<feature type="transmembrane region" description="Helical" evidence="1">
    <location>
        <begin position="7"/>
        <end position="30"/>
    </location>
</feature>
<feature type="topological domain" description="Cytoplasmic" evidence="1">
    <location>
        <begin position="31"/>
        <end position="284"/>
    </location>
</feature>
<feature type="domain" description="J" evidence="1">
    <location>
        <begin position="218"/>
        <end position="284"/>
    </location>
</feature>